<organism>
    <name type="scientific">Burkholderia cenocepacia (strain HI2424)</name>
    <dbReference type="NCBI Taxonomy" id="331272"/>
    <lineage>
        <taxon>Bacteria</taxon>
        <taxon>Pseudomonadati</taxon>
        <taxon>Pseudomonadota</taxon>
        <taxon>Betaproteobacteria</taxon>
        <taxon>Burkholderiales</taxon>
        <taxon>Burkholderiaceae</taxon>
        <taxon>Burkholderia</taxon>
        <taxon>Burkholderia cepacia complex</taxon>
    </lineage>
</organism>
<reference key="1">
    <citation type="submission" date="2006-08" db="EMBL/GenBank/DDBJ databases">
        <title>Complete sequence of chromosome 1 of Burkholderia cenocepacia HI2424.</title>
        <authorList>
            <person name="Copeland A."/>
            <person name="Lucas S."/>
            <person name="Lapidus A."/>
            <person name="Barry K."/>
            <person name="Detter J.C."/>
            <person name="Glavina del Rio T."/>
            <person name="Hammon N."/>
            <person name="Israni S."/>
            <person name="Pitluck S."/>
            <person name="Chain P."/>
            <person name="Malfatti S."/>
            <person name="Shin M."/>
            <person name="Vergez L."/>
            <person name="Schmutz J."/>
            <person name="Larimer F."/>
            <person name="Land M."/>
            <person name="Hauser L."/>
            <person name="Kyrpides N."/>
            <person name="Kim E."/>
            <person name="LiPuma J.J."/>
            <person name="Gonzalez C.F."/>
            <person name="Konstantinidis K."/>
            <person name="Tiedje J.M."/>
            <person name="Richardson P."/>
        </authorList>
    </citation>
    <scope>NUCLEOTIDE SEQUENCE [LARGE SCALE GENOMIC DNA]</scope>
    <source>
        <strain>HI2424</strain>
    </source>
</reference>
<name>RRF_BURCH</name>
<sequence>MSVADVKKGVEQKMQRSIEAFKNDLAKIRTGRAHTGLLDHVQVDYYGSMVPISQVANLTLVDARTIGVQPWEKNMVAKVEKAIREADLGLNPATTGDLIRVPMPALTEERRRELTKVVKSEGETAKVAIRNLRRDANEALKKLVKDKEISEDDERRASDDVQKLTDKHVAEIDKLVQTKEAEIMTV</sequence>
<gene>
    <name evidence="1" type="primary">frr</name>
    <name type="ordered locus">Bcen2424_2016</name>
</gene>
<proteinExistence type="inferred from homology"/>
<keyword id="KW-0963">Cytoplasm</keyword>
<keyword id="KW-0648">Protein biosynthesis</keyword>
<comment type="function">
    <text evidence="1">Responsible for the release of ribosomes from messenger RNA at the termination of protein biosynthesis. May increase the efficiency of translation by recycling ribosomes from one round of translation to another.</text>
</comment>
<comment type="subcellular location">
    <subcellularLocation>
        <location evidence="1">Cytoplasm</location>
    </subcellularLocation>
</comment>
<comment type="similarity">
    <text evidence="1">Belongs to the RRF family.</text>
</comment>
<feature type="chain" id="PRO_1000003116" description="Ribosome-recycling factor">
    <location>
        <begin position="1"/>
        <end position="186"/>
    </location>
</feature>
<evidence type="ECO:0000255" key="1">
    <source>
        <dbReference type="HAMAP-Rule" id="MF_00040"/>
    </source>
</evidence>
<dbReference type="EMBL" id="CP000458">
    <property type="protein sequence ID" value="ABK08767.1"/>
    <property type="molecule type" value="Genomic_DNA"/>
</dbReference>
<dbReference type="RefSeq" id="WP_006478492.1">
    <property type="nucleotide sequence ID" value="NC_008542.1"/>
</dbReference>
<dbReference type="SMR" id="A0K8E0"/>
<dbReference type="GeneID" id="83048813"/>
<dbReference type="KEGG" id="bch:Bcen2424_2016"/>
<dbReference type="HOGENOM" id="CLU_073981_2_1_4"/>
<dbReference type="GO" id="GO:0005829">
    <property type="term" value="C:cytosol"/>
    <property type="evidence" value="ECO:0007669"/>
    <property type="project" value="GOC"/>
</dbReference>
<dbReference type="GO" id="GO:0043023">
    <property type="term" value="F:ribosomal large subunit binding"/>
    <property type="evidence" value="ECO:0007669"/>
    <property type="project" value="TreeGrafter"/>
</dbReference>
<dbReference type="GO" id="GO:0002184">
    <property type="term" value="P:cytoplasmic translational termination"/>
    <property type="evidence" value="ECO:0007669"/>
    <property type="project" value="TreeGrafter"/>
</dbReference>
<dbReference type="CDD" id="cd00520">
    <property type="entry name" value="RRF"/>
    <property type="match status" value="1"/>
</dbReference>
<dbReference type="FunFam" id="1.10.132.20:FF:000001">
    <property type="entry name" value="Ribosome-recycling factor"/>
    <property type="match status" value="1"/>
</dbReference>
<dbReference type="FunFam" id="3.30.1360.40:FF:000001">
    <property type="entry name" value="Ribosome-recycling factor"/>
    <property type="match status" value="1"/>
</dbReference>
<dbReference type="Gene3D" id="3.30.1360.40">
    <property type="match status" value="1"/>
</dbReference>
<dbReference type="Gene3D" id="1.10.132.20">
    <property type="entry name" value="Ribosome-recycling factor"/>
    <property type="match status" value="1"/>
</dbReference>
<dbReference type="HAMAP" id="MF_00040">
    <property type="entry name" value="RRF"/>
    <property type="match status" value="1"/>
</dbReference>
<dbReference type="InterPro" id="IPR002661">
    <property type="entry name" value="Ribosome_recyc_fac"/>
</dbReference>
<dbReference type="InterPro" id="IPR023584">
    <property type="entry name" value="Ribosome_recyc_fac_dom"/>
</dbReference>
<dbReference type="InterPro" id="IPR036191">
    <property type="entry name" value="RRF_sf"/>
</dbReference>
<dbReference type="NCBIfam" id="TIGR00496">
    <property type="entry name" value="frr"/>
    <property type="match status" value="1"/>
</dbReference>
<dbReference type="PANTHER" id="PTHR20982:SF3">
    <property type="entry name" value="MITOCHONDRIAL RIBOSOME RECYCLING FACTOR PSEUDO 1"/>
    <property type="match status" value="1"/>
</dbReference>
<dbReference type="PANTHER" id="PTHR20982">
    <property type="entry name" value="RIBOSOME RECYCLING FACTOR"/>
    <property type="match status" value="1"/>
</dbReference>
<dbReference type="Pfam" id="PF01765">
    <property type="entry name" value="RRF"/>
    <property type="match status" value="1"/>
</dbReference>
<dbReference type="SUPFAM" id="SSF55194">
    <property type="entry name" value="Ribosome recycling factor, RRF"/>
    <property type="match status" value="1"/>
</dbReference>
<accession>A0K8E0</accession>
<protein>
    <recommendedName>
        <fullName evidence="1">Ribosome-recycling factor</fullName>
        <shortName evidence="1">RRF</shortName>
    </recommendedName>
    <alternativeName>
        <fullName evidence="1">Ribosome-releasing factor</fullName>
    </alternativeName>
</protein>